<evidence type="ECO:0000255" key="1">
    <source>
        <dbReference type="HAMAP-Rule" id="MF_00255"/>
    </source>
</evidence>
<organism>
    <name type="scientific">Escherichia coli (strain ATCC 8739 / DSM 1576 / NBRC 3972 / NCIMB 8545 / WDCM 00012 / Crooks)</name>
    <dbReference type="NCBI Taxonomy" id="481805"/>
    <lineage>
        <taxon>Bacteria</taxon>
        <taxon>Pseudomonadati</taxon>
        <taxon>Pseudomonadota</taxon>
        <taxon>Gammaproteobacteria</taxon>
        <taxon>Enterobacterales</taxon>
        <taxon>Enterobacteriaceae</taxon>
        <taxon>Escherichia</taxon>
    </lineage>
</organism>
<sequence>MSEKTFLVEIGTEELPPKALRSLAESFAANFTAELDNAGLAHGTVQWFAAPRRLALKVANLAEAQPDREIEKRGPAIAQAFDAEGKPSKAAEGWARGCGITVDQAERLTTDKGEWLLYRAHVKGESTEALLPNMVATSLAKLPIPKLMRWGASDVHFVRPVHTVTLLLGDKVIPATILGIQSDRVIRGHRFMGEPEFTIDNADQYPEILRERGKVIADYEERKAKIKADAEEAARKIGGNADLSESLLEEVASLVEWPVVLTAKFEEKFLAVPAEALVYTMKGDQKYFPVYANDGKLLPNFIFVANIESKDPQQIISGNEKVVRPRLADAEFFFNTDRKKRLEDNLPRLQTVLFQQQLGTLRDKTDRIQALAGWIAEQIGADVNHATRAGLLSKCDLMTNMVFEFTDTQGVMGMHYARHDGEAEDVAVALNEQYQPRFAGDDLPSNPVACALAIADKMDTLAGIFGIGQHPKGDKDPFALRRAALGVLRIIVEKNLNLDLQTLTEEAVRLYGDKLTNANVVDDVIDFMLGRFRAWYQDEGYTVDTIQAVLARRPTRPADFDARMKAVSHFRTLDAAAALAAANKRVSNILAKSDEVLSDRVNASTLKEPEEIKLAMQVVVLRDKLEPYFTEGRYQDALVELAELREPVDAFFDKVMVMVDDKELRINRLTMLEKLRELFLRVADISLLQ</sequence>
<comment type="catalytic activity">
    <reaction evidence="1">
        <text>tRNA(Gly) + glycine + ATP = glycyl-tRNA(Gly) + AMP + diphosphate</text>
        <dbReference type="Rhea" id="RHEA:16013"/>
        <dbReference type="Rhea" id="RHEA-COMP:9664"/>
        <dbReference type="Rhea" id="RHEA-COMP:9683"/>
        <dbReference type="ChEBI" id="CHEBI:30616"/>
        <dbReference type="ChEBI" id="CHEBI:33019"/>
        <dbReference type="ChEBI" id="CHEBI:57305"/>
        <dbReference type="ChEBI" id="CHEBI:78442"/>
        <dbReference type="ChEBI" id="CHEBI:78522"/>
        <dbReference type="ChEBI" id="CHEBI:456215"/>
        <dbReference type="EC" id="6.1.1.14"/>
    </reaction>
</comment>
<comment type="subunit">
    <text evidence="1">Tetramer of two alpha and two beta subunits.</text>
</comment>
<comment type="subcellular location">
    <subcellularLocation>
        <location evidence="1">Cytoplasm</location>
    </subcellularLocation>
</comment>
<comment type="similarity">
    <text evidence="1">Belongs to the class-II aminoacyl-tRNA synthetase family.</text>
</comment>
<proteinExistence type="inferred from homology"/>
<feature type="chain" id="PRO_1000078541" description="Glycine--tRNA ligase beta subunit">
    <location>
        <begin position="1"/>
        <end position="689"/>
    </location>
</feature>
<gene>
    <name evidence="1" type="primary">glyS</name>
    <name type="ordered locus">EcolC_0156</name>
</gene>
<name>SYGB_ECOLC</name>
<protein>
    <recommendedName>
        <fullName evidence="1">Glycine--tRNA ligase beta subunit</fullName>
        <ecNumber evidence="1">6.1.1.14</ecNumber>
    </recommendedName>
    <alternativeName>
        <fullName evidence="1">Glycyl-tRNA synthetase beta subunit</fullName>
        <shortName evidence="1">GlyRS</shortName>
    </alternativeName>
</protein>
<reference key="1">
    <citation type="submission" date="2008-02" db="EMBL/GenBank/DDBJ databases">
        <title>Complete sequence of Escherichia coli C str. ATCC 8739.</title>
        <authorList>
            <person name="Copeland A."/>
            <person name="Lucas S."/>
            <person name="Lapidus A."/>
            <person name="Glavina del Rio T."/>
            <person name="Dalin E."/>
            <person name="Tice H."/>
            <person name="Bruce D."/>
            <person name="Goodwin L."/>
            <person name="Pitluck S."/>
            <person name="Kiss H."/>
            <person name="Brettin T."/>
            <person name="Detter J.C."/>
            <person name="Han C."/>
            <person name="Kuske C.R."/>
            <person name="Schmutz J."/>
            <person name="Larimer F."/>
            <person name="Land M."/>
            <person name="Hauser L."/>
            <person name="Kyrpides N."/>
            <person name="Mikhailova N."/>
            <person name="Ingram L."/>
            <person name="Richardson P."/>
        </authorList>
    </citation>
    <scope>NUCLEOTIDE SEQUENCE [LARGE SCALE GENOMIC DNA]</scope>
    <source>
        <strain>ATCC 8739 / DSM 1576 / NBRC 3972 / NCIMB 8545 / WDCM 00012 / Crooks</strain>
    </source>
</reference>
<dbReference type="EC" id="6.1.1.14" evidence="1"/>
<dbReference type="EMBL" id="CP000946">
    <property type="protein sequence ID" value="ACA75838.1"/>
    <property type="molecule type" value="Genomic_DNA"/>
</dbReference>
<dbReference type="RefSeq" id="WP_001291772.1">
    <property type="nucleotide sequence ID" value="NZ_MTFT01000030.1"/>
</dbReference>
<dbReference type="SMR" id="B1IZN4"/>
<dbReference type="KEGG" id="ecl:EcolC_0156"/>
<dbReference type="HOGENOM" id="CLU_007220_2_2_6"/>
<dbReference type="GO" id="GO:0005829">
    <property type="term" value="C:cytosol"/>
    <property type="evidence" value="ECO:0007669"/>
    <property type="project" value="TreeGrafter"/>
</dbReference>
<dbReference type="GO" id="GO:0004814">
    <property type="term" value="F:arginine-tRNA ligase activity"/>
    <property type="evidence" value="ECO:0007669"/>
    <property type="project" value="InterPro"/>
</dbReference>
<dbReference type="GO" id="GO:0005524">
    <property type="term" value="F:ATP binding"/>
    <property type="evidence" value="ECO:0007669"/>
    <property type="project" value="UniProtKB-UniRule"/>
</dbReference>
<dbReference type="GO" id="GO:0004820">
    <property type="term" value="F:glycine-tRNA ligase activity"/>
    <property type="evidence" value="ECO:0007669"/>
    <property type="project" value="UniProtKB-UniRule"/>
</dbReference>
<dbReference type="GO" id="GO:0006420">
    <property type="term" value="P:arginyl-tRNA aminoacylation"/>
    <property type="evidence" value="ECO:0007669"/>
    <property type="project" value="InterPro"/>
</dbReference>
<dbReference type="GO" id="GO:0006426">
    <property type="term" value="P:glycyl-tRNA aminoacylation"/>
    <property type="evidence" value="ECO:0007669"/>
    <property type="project" value="UniProtKB-UniRule"/>
</dbReference>
<dbReference type="HAMAP" id="MF_00255">
    <property type="entry name" value="Gly_tRNA_synth_beta"/>
    <property type="match status" value="1"/>
</dbReference>
<dbReference type="InterPro" id="IPR008909">
    <property type="entry name" value="DALR_anticod-bd"/>
</dbReference>
<dbReference type="InterPro" id="IPR015944">
    <property type="entry name" value="Gly-tRNA-synth_bsu"/>
</dbReference>
<dbReference type="InterPro" id="IPR006194">
    <property type="entry name" value="Gly-tRNA-synth_heterodimer"/>
</dbReference>
<dbReference type="NCBIfam" id="TIGR00211">
    <property type="entry name" value="glyS"/>
    <property type="match status" value="1"/>
</dbReference>
<dbReference type="PANTHER" id="PTHR30075:SF2">
    <property type="entry name" value="GLYCINE--TRNA LIGASE, CHLOROPLASTIC_MITOCHONDRIAL 2"/>
    <property type="match status" value="1"/>
</dbReference>
<dbReference type="PANTHER" id="PTHR30075">
    <property type="entry name" value="GLYCYL-TRNA SYNTHETASE"/>
    <property type="match status" value="1"/>
</dbReference>
<dbReference type="Pfam" id="PF05746">
    <property type="entry name" value="DALR_1"/>
    <property type="match status" value="1"/>
</dbReference>
<dbReference type="Pfam" id="PF02092">
    <property type="entry name" value="tRNA_synt_2f"/>
    <property type="match status" value="1"/>
</dbReference>
<dbReference type="PRINTS" id="PR01045">
    <property type="entry name" value="TRNASYNTHGB"/>
</dbReference>
<dbReference type="SUPFAM" id="SSF109604">
    <property type="entry name" value="HD-domain/PDEase-like"/>
    <property type="match status" value="1"/>
</dbReference>
<dbReference type="PROSITE" id="PS50861">
    <property type="entry name" value="AA_TRNA_LIGASE_II_GLYAB"/>
    <property type="match status" value="1"/>
</dbReference>
<keyword id="KW-0030">Aminoacyl-tRNA synthetase</keyword>
<keyword id="KW-0067">ATP-binding</keyword>
<keyword id="KW-0963">Cytoplasm</keyword>
<keyword id="KW-0436">Ligase</keyword>
<keyword id="KW-0547">Nucleotide-binding</keyword>
<keyword id="KW-0648">Protein biosynthesis</keyword>
<accession>B1IZN4</accession>